<proteinExistence type="inferred from homology"/>
<feature type="chain" id="PRO_0000101114" description="Threonine--tRNA ligase catalytic subunit">
    <location>
        <begin position="1"/>
        <end position="540"/>
    </location>
</feature>
<feature type="region of interest" description="Catalytic" evidence="3">
    <location>
        <begin position="134"/>
        <end position="428"/>
    </location>
</feature>
<feature type="binding site" evidence="3">
    <location>
        <position position="226"/>
    </location>
    <ligand>
        <name>Zn(2+)</name>
        <dbReference type="ChEBI" id="CHEBI:29105"/>
    </ligand>
</feature>
<feature type="binding site" evidence="3">
    <location>
        <position position="277"/>
    </location>
    <ligand>
        <name>Zn(2+)</name>
        <dbReference type="ChEBI" id="CHEBI:29105"/>
    </ligand>
</feature>
<feature type="binding site" evidence="3">
    <location>
        <position position="405"/>
    </location>
    <ligand>
        <name>Zn(2+)</name>
        <dbReference type="ChEBI" id="CHEBI:29105"/>
    </ligand>
</feature>
<protein>
    <recommendedName>
        <fullName>Threonine--tRNA ligase catalytic subunit</fullName>
        <ecNumber evidence="3">6.1.1.3</ecNumber>
    </recommendedName>
    <alternativeName>
        <fullName>Threonyl-tRNA synthetase catalytic subunit</fullName>
        <shortName>ThrRS-cat</shortName>
    </alternativeName>
</protein>
<organism>
    <name type="scientific">Sulfurisphaera tokodaii (strain DSM 16993 / JCM 10545 / NBRC 100140 / 7)</name>
    <name type="common">Sulfolobus tokodaii</name>
    <dbReference type="NCBI Taxonomy" id="273063"/>
    <lineage>
        <taxon>Archaea</taxon>
        <taxon>Thermoproteota</taxon>
        <taxon>Thermoprotei</taxon>
        <taxon>Sulfolobales</taxon>
        <taxon>Sulfolobaceae</taxon>
        <taxon>Sulfurisphaera</taxon>
    </lineage>
</organism>
<reference key="1">
    <citation type="journal article" date="2001" name="DNA Res.">
        <title>Complete genome sequence of an aerobic thermoacidophilic Crenarchaeon, Sulfolobus tokodaii strain7.</title>
        <authorList>
            <person name="Kawarabayasi Y."/>
            <person name="Hino Y."/>
            <person name="Horikawa H."/>
            <person name="Jin-no K."/>
            <person name="Takahashi M."/>
            <person name="Sekine M."/>
            <person name="Baba S."/>
            <person name="Ankai A."/>
            <person name="Kosugi H."/>
            <person name="Hosoyama A."/>
            <person name="Fukui S."/>
            <person name="Nagai Y."/>
            <person name="Nishijima K."/>
            <person name="Otsuka R."/>
            <person name="Nakazawa H."/>
            <person name="Takamiya M."/>
            <person name="Kato Y."/>
            <person name="Yoshizawa T."/>
            <person name="Tanaka T."/>
            <person name="Kudoh Y."/>
            <person name="Yamazaki J."/>
            <person name="Kushida N."/>
            <person name="Oguchi A."/>
            <person name="Aoki K."/>
            <person name="Masuda S."/>
            <person name="Yanagii M."/>
            <person name="Nishimura M."/>
            <person name="Yamagishi A."/>
            <person name="Oshima T."/>
            <person name="Kikuchi H."/>
        </authorList>
    </citation>
    <scope>NUCLEOTIDE SEQUENCE [LARGE SCALE GENOMIC DNA]</scope>
    <source>
        <strain>DSM 16993 / JCM 10545 / NBRC 100140 / 7</strain>
    </source>
</reference>
<sequence>MEEYKGVWLKAGIIYALNLASNGFKPVEVGLGERDFYVDVESDTTLTLDEAKKFATYNQYSYQLKDGYIEFNGNKIKVLGEPSSLEPKYFEILNISVHHPSPNVQYVRIRGVGFEKKEELDQYLKWLEEVSEYDHRIIGERLDLFSFPDETAPGLALFHYKGQIIRKELMKFMEEINESMGYQEVFTAEIYRSILWKTSGHYDYYKDKMVLFKMEDEELGLKPMNCPAHILIYKSKTRSYKDLPIRFSEFGLVFRWEKRGELYGLLRVRGFVQDDGHIFLTEDQIKDEVKMLVKKTIDVLSIFGFKGDDVRINLSTRPDESIGSDELWEKATNALVSALNELGIKYIVKEKEGAFYGPKIDFDIRDSLGRWWQLSTIQVDFNLPERFKLEYIDKDGSRKRPVMIHRAIYGSIERFMAILLEHFRGKLPTWLSPVQVRILPISKDVEDYALNLLSKLKENKIRVELDMSDETLSKRIKKAYDEGVPYMIIVGKKEREEGKVTVRGRNNVEIRGVKFDDFLKALLEEIRNRDLNQSAINKLK</sequence>
<name>SYTC_SULTO</name>
<comment type="function">
    <text evidence="1">Catalyzes the attachment of threonine to tRNA(Thr) in a two-step reaction: L-threonine is first activated by ATP to form Thr-AMP and then transferred to the acceptor end of tRNA(Thr). Also activates L-serine and transfers it to tRNA(Thr) but cannot deacylate incorrectly charged amino acid; unlike most archaea the editing function is found in a freestanding protein.</text>
</comment>
<comment type="catalytic activity">
    <reaction evidence="3">
        <text>tRNA(Thr) + L-threonine + ATP = L-threonyl-tRNA(Thr) + AMP + diphosphate + H(+)</text>
        <dbReference type="Rhea" id="RHEA:24624"/>
        <dbReference type="Rhea" id="RHEA-COMP:9670"/>
        <dbReference type="Rhea" id="RHEA-COMP:9704"/>
        <dbReference type="ChEBI" id="CHEBI:15378"/>
        <dbReference type="ChEBI" id="CHEBI:30616"/>
        <dbReference type="ChEBI" id="CHEBI:33019"/>
        <dbReference type="ChEBI" id="CHEBI:57926"/>
        <dbReference type="ChEBI" id="CHEBI:78442"/>
        <dbReference type="ChEBI" id="CHEBI:78534"/>
        <dbReference type="ChEBI" id="CHEBI:456215"/>
        <dbReference type="EC" id="6.1.1.3"/>
    </reaction>
</comment>
<comment type="cofactor">
    <cofactor evidence="3">
        <name>Zn(2+)</name>
        <dbReference type="ChEBI" id="CHEBI:29105"/>
    </cofactor>
    <text evidence="3">Binds 1 zinc ion per subunit.</text>
</comment>
<comment type="subunit">
    <text evidence="1 2">Homodimer (By similarity). Probably interacts with its editing subunit (By similarity).</text>
</comment>
<comment type="subcellular location">
    <subcellularLocation>
        <location evidence="3">Cytoplasm</location>
    </subcellularLocation>
</comment>
<comment type="similarity">
    <text evidence="3">Belongs to the class-II aminoacyl-tRNA synthetase family.</text>
</comment>
<gene>
    <name evidence="4" type="primary">thrS-cat</name>
    <name type="synonym">thrS</name>
    <name type="ordered locus">STK_09660</name>
</gene>
<dbReference type="EC" id="6.1.1.3" evidence="3"/>
<dbReference type="EMBL" id="BA000023">
    <property type="protein sequence ID" value="BAK54429.1"/>
    <property type="molecule type" value="Genomic_DNA"/>
</dbReference>
<dbReference type="RefSeq" id="WP_010978967.1">
    <property type="nucleotide sequence ID" value="NC_003106.2"/>
</dbReference>
<dbReference type="SMR" id="Q973C8"/>
<dbReference type="STRING" id="273063.STK_09660"/>
<dbReference type="GeneID" id="1458938"/>
<dbReference type="KEGG" id="sto:STK_09660"/>
<dbReference type="PATRIC" id="fig|273063.9.peg.1081"/>
<dbReference type="eggNOG" id="arCOG00401">
    <property type="taxonomic scope" value="Archaea"/>
</dbReference>
<dbReference type="OrthoDB" id="372136at2157"/>
<dbReference type="Proteomes" id="UP000001015">
    <property type="component" value="Chromosome"/>
</dbReference>
<dbReference type="GO" id="GO:0005737">
    <property type="term" value="C:cytoplasm"/>
    <property type="evidence" value="ECO:0007669"/>
    <property type="project" value="UniProtKB-SubCell"/>
</dbReference>
<dbReference type="GO" id="GO:0005524">
    <property type="term" value="F:ATP binding"/>
    <property type="evidence" value="ECO:0007669"/>
    <property type="project" value="UniProtKB-UniRule"/>
</dbReference>
<dbReference type="GO" id="GO:0046872">
    <property type="term" value="F:metal ion binding"/>
    <property type="evidence" value="ECO:0007669"/>
    <property type="project" value="UniProtKB-KW"/>
</dbReference>
<dbReference type="GO" id="GO:0004829">
    <property type="term" value="F:threonine-tRNA ligase activity"/>
    <property type="evidence" value="ECO:0007669"/>
    <property type="project" value="UniProtKB-UniRule"/>
</dbReference>
<dbReference type="GO" id="GO:0000049">
    <property type="term" value="F:tRNA binding"/>
    <property type="evidence" value="ECO:0007669"/>
    <property type="project" value="UniProtKB-KW"/>
</dbReference>
<dbReference type="GO" id="GO:0006435">
    <property type="term" value="P:threonyl-tRNA aminoacylation"/>
    <property type="evidence" value="ECO:0007669"/>
    <property type="project" value="UniProtKB-UniRule"/>
</dbReference>
<dbReference type="CDD" id="cd00860">
    <property type="entry name" value="ThrRS_anticodon"/>
    <property type="match status" value="1"/>
</dbReference>
<dbReference type="CDD" id="cd00771">
    <property type="entry name" value="ThrRS_core"/>
    <property type="match status" value="1"/>
</dbReference>
<dbReference type="FunFam" id="3.30.930.10:FF:000002">
    <property type="entry name" value="Threonine--tRNA ligase"/>
    <property type="match status" value="1"/>
</dbReference>
<dbReference type="FunFam" id="3.40.50.800:FF:000001">
    <property type="entry name" value="Threonine--tRNA ligase"/>
    <property type="match status" value="1"/>
</dbReference>
<dbReference type="Gene3D" id="3.40.50.800">
    <property type="entry name" value="Anticodon-binding domain"/>
    <property type="match status" value="1"/>
</dbReference>
<dbReference type="Gene3D" id="3.30.930.10">
    <property type="entry name" value="Bira Bifunctional Protein, Domain 2"/>
    <property type="match status" value="1"/>
</dbReference>
<dbReference type="HAMAP" id="MF_00184">
    <property type="entry name" value="Thr_tRNA_synth"/>
    <property type="match status" value="1"/>
</dbReference>
<dbReference type="InterPro" id="IPR002314">
    <property type="entry name" value="aa-tRNA-synt_IIb"/>
</dbReference>
<dbReference type="InterPro" id="IPR006195">
    <property type="entry name" value="aa-tRNA-synth_II"/>
</dbReference>
<dbReference type="InterPro" id="IPR045864">
    <property type="entry name" value="aa-tRNA-synth_II/BPL/LPL"/>
</dbReference>
<dbReference type="InterPro" id="IPR004154">
    <property type="entry name" value="Anticodon-bd"/>
</dbReference>
<dbReference type="InterPro" id="IPR036621">
    <property type="entry name" value="Anticodon-bd_dom_sf"/>
</dbReference>
<dbReference type="InterPro" id="IPR002320">
    <property type="entry name" value="Thr-tRNA-ligase_IIa"/>
</dbReference>
<dbReference type="InterPro" id="IPR018163">
    <property type="entry name" value="Thr/Ala-tRNA-synth_IIc_edit"/>
</dbReference>
<dbReference type="InterPro" id="IPR047246">
    <property type="entry name" value="ThrRS_anticodon"/>
</dbReference>
<dbReference type="InterPro" id="IPR033728">
    <property type="entry name" value="ThrRS_core"/>
</dbReference>
<dbReference type="NCBIfam" id="TIGR00418">
    <property type="entry name" value="thrS"/>
    <property type="match status" value="1"/>
</dbReference>
<dbReference type="PANTHER" id="PTHR11451:SF44">
    <property type="entry name" value="THREONINE--TRNA LIGASE, CHLOROPLASTIC_MITOCHONDRIAL 2"/>
    <property type="match status" value="1"/>
</dbReference>
<dbReference type="PANTHER" id="PTHR11451">
    <property type="entry name" value="THREONINE-TRNA LIGASE"/>
    <property type="match status" value="1"/>
</dbReference>
<dbReference type="Pfam" id="PF03129">
    <property type="entry name" value="HGTP_anticodon"/>
    <property type="match status" value="1"/>
</dbReference>
<dbReference type="Pfam" id="PF00587">
    <property type="entry name" value="tRNA-synt_2b"/>
    <property type="match status" value="1"/>
</dbReference>
<dbReference type="PRINTS" id="PR01047">
    <property type="entry name" value="TRNASYNTHTHR"/>
</dbReference>
<dbReference type="SUPFAM" id="SSF52954">
    <property type="entry name" value="Class II aaRS ABD-related"/>
    <property type="match status" value="1"/>
</dbReference>
<dbReference type="SUPFAM" id="SSF55681">
    <property type="entry name" value="Class II aaRS and biotin synthetases"/>
    <property type="match status" value="1"/>
</dbReference>
<dbReference type="SUPFAM" id="SSF55186">
    <property type="entry name" value="ThrRS/AlaRS common domain"/>
    <property type="match status" value="1"/>
</dbReference>
<dbReference type="PROSITE" id="PS50862">
    <property type="entry name" value="AA_TRNA_LIGASE_II"/>
    <property type="match status" value="1"/>
</dbReference>
<accession>Q973C8</accession>
<accession>F9VNS1</accession>
<evidence type="ECO:0000250" key="1">
    <source>
        <dbReference type="UniProtKB" id="Q97VW8"/>
    </source>
</evidence>
<evidence type="ECO:0000250" key="2">
    <source>
        <dbReference type="UniProtKB" id="Q9YDW0"/>
    </source>
</evidence>
<evidence type="ECO:0000255" key="3">
    <source>
        <dbReference type="HAMAP-Rule" id="MF_00184"/>
    </source>
</evidence>
<evidence type="ECO:0000305" key="4"/>
<keyword id="KW-0030">Aminoacyl-tRNA synthetase</keyword>
<keyword id="KW-0067">ATP-binding</keyword>
<keyword id="KW-0963">Cytoplasm</keyword>
<keyword id="KW-0436">Ligase</keyword>
<keyword id="KW-0479">Metal-binding</keyword>
<keyword id="KW-0547">Nucleotide-binding</keyword>
<keyword id="KW-0648">Protein biosynthesis</keyword>
<keyword id="KW-1185">Reference proteome</keyword>
<keyword id="KW-0694">RNA-binding</keyword>
<keyword id="KW-0820">tRNA-binding</keyword>
<keyword id="KW-0862">Zinc</keyword>